<organism>
    <name type="scientific">Enterococcus faecalis (strain ATCC 700802 / V583)</name>
    <dbReference type="NCBI Taxonomy" id="226185"/>
    <lineage>
        <taxon>Bacteria</taxon>
        <taxon>Bacillati</taxon>
        <taxon>Bacillota</taxon>
        <taxon>Bacilli</taxon>
        <taxon>Lactobacillales</taxon>
        <taxon>Enterococcaceae</taxon>
        <taxon>Enterococcus</taxon>
    </lineage>
</organism>
<gene>
    <name evidence="1" type="primary">rplB</name>
    <name type="ordered locus">EF_0209</name>
</gene>
<evidence type="ECO:0000255" key="1">
    <source>
        <dbReference type="HAMAP-Rule" id="MF_01320"/>
    </source>
</evidence>
<evidence type="ECO:0000256" key="2">
    <source>
        <dbReference type="SAM" id="MobiDB-lite"/>
    </source>
</evidence>
<evidence type="ECO:0000305" key="3"/>
<keyword id="KW-0002">3D-structure</keyword>
<keyword id="KW-1185">Reference proteome</keyword>
<keyword id="KW-0687">Ribonucleoprotein</keyword>
<keyword id="KW-0689">Ribosomal protein</keyword>
<keyword id="KW-0694">RNA-binding</keyword>
<keyword id="KW-0699">rRNA-binding</keyword>
<reference key="1">
    <citation type="journal article" date="2003" name="Science">
        <title>Role of mobile DNA in the evolution of vancomycin-resistant Enterococcus faecalis.</title>
        <authorList>
            <person name="Paulsen I.T."/>
            <person name="Banerjei L."/>
            <person name="Myers G.S.A."/>
            <person name="Nelson K.E."/>
            <person name="Seshadri R."/>
            <person name="Read T.D."/>
            <person name="Fouts D.E."/>
            <person name="Eisen J.A."/>
            <person name="Gill S.R."/>
            <person name="Heidelberg J.F."/>
            <person name="Tettelin H."/>
            <person name="Dodson R.J."/>
            <person name="Umayam L.A."/>
            <person name="Brinkac L.M."/>
            <person name="Beanan M.J."/>
            <person name="Daugherty S.C."/>
            <person name="DeBoy R.T."/>
            <person name="Durkin S.A."/>
            <person name="Kolonay J.F."/>
            <person name="Madupu R."/>
            <person name="Nelson W.C."/>
            <person name="Vamathevan J.J."/>
            <person name="Tran B."/>
            <person name="Upton J."/>
            <person name="Hansen T."/>
            <person name="Shetty J."/>
            <person name="Khouri H.M."/>
            <person name="Utterback T.R."/>
            <person name="Radune D."/>
            <person name="Ketchum K.A."/>
            <person name="Dougherty B.A."/>
            <person name="Fraser C.M."/>
        </authorList>
    </citation>
    <scope>NUCLEOTIDE SEQUENCE [LARGE SCALE GENOMIC DNA]</scope>
    <source>
        <strain>ATCC 700802 / V583</strain>
    </source>
</reference>
<protein>
    <recommendedName>
        <fullName evidence="1">Large ribosomal subunit protein uL2</fullName>
    </recommendedName>
    <alternativeName>
        <fullName evidence="3">50S ribosomal protein L2</fullName>
    </alternativeName>
</protein>
<name>RL2_ENTFA</name>
<dbReference type="EMBL" id="AE016830">
    <property type="protein sequence ID" value="AAO80078.1"/>
    <property type="molecule type" value="Genomic_DNA"/>
</dbReference>
<dbReference type="RefSeq" id="NP_814007.1">
    <property type="nucleotide sequence ID" value="NC_004668.1"/>
</dbReference>
<dbReference type="RefSeq" id="WP_002356204.1">
    <property type="nucleotide sequence ID" value="NZ_KE136524.1"/>
</dbReference>
<dbReference type="PDB" id="7P7Q">
    <property type="method" value="EM"/>
    <property type="resolution" value="2.40 A"/>
    <property type="chains" value="G=1-275"/>
</dbReference>
<dbReference type="PDB" id="7P7R">
    <property type="method" value="EM"/>
    <property type="resolution" value="2.90 A"/>
    <property type="chains" value="G=1-276"/>
</dbReference>
<dbReference type="PDBsum" id="7P7Q"/>
<dbReference type="PDBsum" id="7P7R"/>
<dbReference type="EMDB" id="EMD-13241"/>
<dbReference type="EMDB" id="EMD-13242"/>
<dbReference type="SMR" id="Q839G1"/>
<dbReference type="STRING" id="226185.EF_0209"/>
<dbReference type="EnsemblBacteria" id="AAO80078">
    <property type="protein sequence ID" value="AAO80078"/>
    <property type="gene ID" value="EF_0209"/>
</dbReference>
<dbReference type="GeneID" id="60892704"/>
<dbReference type="KEGG" id="efa:EF0209"/>
<dbReference type="PATRIC" id="fig|226185.45.peg.57"/>
<dbReference type="eggNOG" id="COG0090">
    <property type="taxonomic scope" value="Bacteria"/>
</dbReference>
<dbReference type="HOGENOM" id="CLU_036235_2_1_9"/>
<dbReference type="Proteomes" id="UP000001415">
    <property type="component" value="Chromosome"/>
</dbReference>
<dbReference type="GO" id="GO:0015934">
    <property type="term" value="C:large ribosomal subunit"/>
    <property type="evidence" value="ECO:0007669"/>
    <property type="project" value="InterPro"/>
</dbReference>
<dbReference type="GO" id="GO:0019843">
    <property type="term" value="F:rRNA binding"/>
    <property type="evidence" value="ECO:0007669"/>
    <property type="project" value="UniProtKB-UniRule"/>
</dbReference>
<dbReference type="GO" id="GO:0003735">
    <property type="term" value="F:structural constituent of ribosome"/>
    <property type="evidence" value="ECO:0007669"/>
    <property type="project" value="InterPro"/>
</dbReference>
<dbReference type="GO" id="GO:0016740">
    <property type="term" value="F:transferase activity"/>
    <property type="evidence" value="ECO:0007669"/>
    <property type="project" value="InterPro"/>
</dbReference>
<dbReference type="GO" id="GO:0002181">
    <property type="term" value="P:cytoplasmic translation"/>
    <property type="evidence" value="ECO:0007669"/>
    <property type="project" value="TreeGrafter"/>
</dbReference>
<dbReference type="FunFam" id="2.30.30.30:FF:000001">
    <property type="entry name" value="50S ribosomal protein L2"/>
    <property type="match status" value="1"/>
</dbReference>
<dbReference type="FunFam" id="2.40.50.140:FF:000003">
    <property type="entry name" value="50S ribosomal protein L2"/>
    <property type="match status" value="1"/>
</dbReference>
<dbReference type="FunFam" id="4.10.950.10:FF:000001">
    <property type="entry name" value="50S ribosomal protein L2"/>
    <property type="match status" value="1"/>
</dbReference>
<dbReference type="Gene3D" id="2.30.30.30">
    <property type="match status" value="1"/>
</dbReference>
<dbReference type="Gene3D" id="2.40.50.140">
    <property type="entry name" value="Nucleic acid-binding proteins"/>
    <property type="match status" value="1"/>
</dbReference>
<dbReference type="Gene3D" id="4.10.950.10">
    <property type="entry name" value="Ribosomal protein L2, domain 3"/>
    <property type="match status" value="1"/>
</dbReference>
<dbReference type="HAMAP" id="MF_01320_B">
    <property type="entry name" value="Ribosomal_uL2_B"/>
    <property type="match status" value="1"/>
</dbReference>
<dbReference type="InterPro" id="IPR012340">
    <property type="entry name" value="NA-bd_OB-fold"/>
</dbReference>
<dbReference type="InterPro" id="IPR014722">
    <property type="entry name" value="Rib_uL2_dom2"/>
</dbReference>
<dbReference type="InterPro" id="IPR002171">
    <property type="entry name" value="Ribosomal_uL2"/>
</dbReference>
<dbReference type="InterPro" id="IPR005880">
    <property type="entry name" value="Ribosomal_uL2_bac/org-type"/>
</dbReference>
<dbReference type="InterPro" id="IPR022669">
    <property type="entry name" value="Ribosomal_uL2_C"/>
</dbReference>
<dbReference type="InterPro" id="IPR022671">
    <property type="entry name" value="Ribosomal_uL2_CS"/>
</dbReference>
<dbReference type="InterPro" id="IPR014726">
    <property type="entry name" value="Ribosomal_uL2_dom3"/>
</dbReference>
<dbReference type="InterPro" id="IPR022666">
    <property type="entry name" value="Ribosomal_uL2_RNA-bd_dom"/>
</dbReference>
<dbReference type="InterPro" id="IPR008991">
    <property type="entry name" value="Translation_prot_SH3-like_sf"/>
</dbReference>
<dbReference type="NCBIfam" id="TIGR01171">
    <property type="entry name" value="rplB_bact"/>
    <property type="match status" value="1"/>
</dbReference>
<dbReference type="PANTHER" id="PTHR13691:SF5">
    <property type="entry name" value="LARGE RIBOSOMAL SUBUNIT PROTEIN UL2M"/>
    <property type="match status" value="1"/>
</dbReference>
<dbReference type="PANTHER" id="PTHR13691">
    <property type="entry name" value="RIBOSOMAL PROTEIN L2"/>
    <property type="match status" value="1"/>
</dbReference>
<dbReference type="Pfam" id="PF00181">
    <property type="entry name" value="Ribosomal_L2"/>
    <property type="match status" value="1"/>
</dbReference>
<dbReference type="Pfam" id="PF03947">
    <property type="entry name" value="Ribosomal_L2_C"/>
    <property type="match status" value="1"/>
</dbReference>
<dbReference type="PIRSF" id="PIRSF002158">
    <property type="entry name" value="Ribosomal_L2"/>
    <property type="match status" value="1"/>
</dbReference>
<dbReference type="SMART" id="SM01383">
    <property type="entry name" value="Ribosomal_L2"/>
    <property type="match status" value="1"/>
</dbReference>
<dbReference type="SMART" id="SM01382">
    <property type="entry name" value="Ribosomal_L2_C"/>
    <property type="match status" value="1"/>
</dbReference>
<dbReference type="SUPFAM" id="SSF50249">
    <property type="entry name" value="Nucleic acid-binding proteins"/>
    <property type="match status" value="1"/>
</dbReference>
<dbReference type="SUPFAM" id="SSF50104">
    <property type="entry name" value="Translation proteins SH3-like domain"/>
    <property type="match status" value="1"/>
</dbReference>
<dbReference type="PROSITE" id="PS00467">
    <property type="entry name" value="RIBOSOMAL_L2"/>
    <property type="match status" value="1"/>
</dbReference>
<feature type="chain" id="PRO_0000129562" description="Large ribosomal subunit protein uL2">
    <location>
        <begin position="1"/>
        <end position="276"/>
    </location>
</feature>
<feature type="region of interest" description="Disordered" evidence="2">
    <location>
        <begin position="34"/>
        <end position="55"/>
    </location>
</feature>
<feature type="region of interest" description="Disordered" evidence="2">
    <location>
        <begin position="221"/>
        <end position="276"/>
    </location>
</feature>
<feature type="compositionally biased region" description="Polar residues" evidence="2">
    <location>
        <begin position="37"/>
        <end position="48"/>
    </location>
</feature>
<accession>Q839G1</accession>
<proteinExistence type="evidence at protein level"/>
<comment type="function">
    <text evidence="1">One of the primary rRNA binding proteins. Required for association of the 30S and 50S subunits to form the 70S ribosome, for tRNA binding and peptide bond formation. It has been suggested to have peptidyltransferase activity; this is somewhat controversial. Makes several contacts with the 16S rRNA in the 70S ribosome.</text>
</comment>
<comment type="subunit">
    <text evidence="1">Part of the 50S ribosomal subunit. Forms a bridge to the 30S subunit in the 70S ribosome.</text>
</comment>
<comment type="similarity">
    <text evidence="1">Belongs to the universal ribosomal protein uL2 family.</text>
</comment>
<sequence length="276" mass="30234">MAIKKYKPTTNGRRNMTSSDFAEITTSTPEKSLLQPLKNNAGRNNNGRITVRHQGGGHKRQYRVIDFKRNKDNVAAVVKTIEYDPNRSANIALVHYEDGVKAYILAPKGLEVGMRLVSGPEADIKVGNALPLENIPVGTVIHNIEMKPGKGGQLIRSAGTSAQVLGKEGKYVLIRLNSGEVRMILATCRATIGSVGNEQHELINIGKAGRSRWMRKRPTVRGSVMNPNDHPHGGGEGKTPIGRKAPVSPWGQPAIGYKTRNKKAKSDKLIVRRRTK</sequence>